<evidence type="ECO:0000255" key="1">
    <source>
        <dbReference type="HAMAP-Rule" id="MF_00156"/>
    </source>
</evidence>
<reference key="1">
    <citation type="journal article" date="2009" name="PLoS Genet.">
        <title>Organised genome dynamics in the Escherichia coli species results in highly diverse adaptive paths.</title>
        <authorList>
            <person name="Touchon M."/>
            <person name="Hoede C."/>
            <person name="Tenaillon O."/>
            <person name="Barbe V."/>
            <person name="Baeriswyl S."/>
            <person name="Bidet P."/>
            <person name="Bingen E."/>
            <person name="Bonacorsi S."/>
            <person name="Bouchier C."/>
            <person name="Bouvet O."/>
            <person name="Calteau A."/>
            <person name="Chiapello H."/>
            <person name="Clermont O."/>
            <person name="Cruveiller S."/>
            <person name="Danchin A."/>
            <person name="Diard M."/>
            <person name="Dossat C."/>
            <person name="Karoui M.E."/>
            <person name="Frapy E."/>
            <person name="Garry L."/>
            <person name="Ghigo J.M."/>
            <person name="Gilles A.M."/>
            <person name="Johnson J."/>
            <person name="Le Bouguenec C."/>
            <person name="Lescat M."/>
            <person name="Mangenot S."/>
            <person name="Martinez-Jehanne V."/>
            <person name="Matic I."/>
            <person name="Nassif X."/>
            <person name="Oztas S."/>
            <person name="Petit M.A."/>
            <person name="Pichon C."/>
            <person name="Rouy Z."/>
            <person name="Ruf C.S."/>
            <person name="Schneider D."/>
            <person name="Tourret J."/>
            <person name="Vacherie B."/>
            <person name="Vallenet D."/>
            <person name="Medigue C."/>
            <person name="Rocha E.P.C."/>
            <person name="Denamur E."/>
        </authorList>
    </citation>
    <scope>NUCLEOTIDE SEQUENCE [LARGE SCALE GENOMIC DNA]</scope>
    <source>
        <strain>ED1a</strain>
    </source>
</reference>
<sequence length="264" mass="28149">MKPTTIASLQKCKQDKKRFATITAYDYSFAKLFADEGINVMLVGDSLGMTVQGHDSTLPVTVADIAYHTAAVRRGAPNCLLLADLPFMAYATPEQAFENAATVMRAGANMVKIEGGEWLVETVQMLTERAVPVCGHLGLTPQSVNIFGGYKVQGRGDEAGDRLLSDALALEAAGAQLLVLECVPVELAKRITEALAIPVIGIGAGNVTDGQILVMHDAFGITGGHIPKFAKNFLAETGDIRAAVRQYMAEVESGVYPGEEHSFH</sequence>
<organism>
    <name type="scientific">Escherichia coli O81 (strain ED1a)</name>
    <dbReference type="NCBI Taxonomy" id="585397"/>
    <lineage>
        <taxon>Bacteria</taxon>
        <taxon>Pseudomonadati</taxon>
        <taxon>Pseudomonadota</taxon>
        <taxon>Gammaproteobacteria</taxon>
        <taxon>Enterobacterales</taxon>
        <taxon>Enterobacteriaceae</taxon>
        <taxon>Escherichia</taxon>
    </lineage>
</organism>
<keyword id="KW-0963">Cytoplasm</keyword>
<keyword id="KW-0460">Magnesium</keyword>
<keyword id="KW-0479">Metal-binding</keyword>
<keyword id="KW-0566">Pantothenate biosynthesis</keyword>
<keyword id="KW-0808">Transferase</keyword>
<protein>
    <recommendedName>
        <fullName evidence="1">3-methyl-2-oxobutanoate hydroxymethyltransferase</fullName>
        <ecNumber evidence="1">2.1.2.11</ecNumber>
    </recommendedName>
    <alternativeName>
        <fullName evidence="1">Ketopantoate hydroxymethyltransferase</fullName>
        <shortName evidence="1">KPHMT</shortName>
    </alternativeName>
</protein>
<name>PANB_ECO81</name>
<dbReference type="EC" id="2.1.2.11" evidence="1"/>
<dbReference type="EMBL" id="CU928162">
    <property type="protein sequence ID" value="CAR06361.1"/>
    <property type="molecule type" value="Genomic_DNA"/>
</dbReference>
<dbReference type="RefSeq" id="WP_000805441.1">
    <property type="nucleotide sequence ID" value="NC_011745.1"/>
</dbReference>
<dbReference type="SMR" id="B7MNZ6"/>
<dbReference type="KEGG" id="ecq:ECED1_0139"/>
<dbReference type="HOGENOM" id="CLU_036645_1_0_6"/>
<dbReference type="UniPathway" id="UPA00028">
    <property type="reaction ID" value="UER00003"/>
</dbReference>
<dbReference type="Proteomes" id="UP000000748">
    <property type="component" value="Chromosome"/>
</dbReference>
<dbReference type="GO" id="GO:0005737">
    <property type="term" value="C:cytoplasm"/>
    <property type="evidence" value="ECO:0007669"/>
    <property type="project" value="UniProtKB-SubCell"/>
</dbReference>
<dbReference type="GO" id="GO:0003864">
    <property type="term" value="F:3-methyl-2-oxobutanoate hydroxymethyltransferase activity"/>
    <property type="evidence" value="ECO:0007669"/>
    <property type="project" value="UniProtKB-UniRule"/>
</dbReference>
<dbReference type="GO" id="GO:0000287">
    <property type="term" value="F:magnesium ion binding"/>
    <property type="evidence" value="ECO:0007669"/>
    <property type="project" value="TreeGrafter"/>
</dbReference>
<dbReference type="GO" id="GO:0015940">
    <property type="term" value="P:pantothenate biosynthetic process"/>
    <property type="evidence" value="ECO:0007669"/>
    <property type="project" value="UniProtKB-UniRule"/>
</dbReference>
<dbReference type="CDD" id="cd06557">
    <property type="entry name" value="KPHMT-like"/>
    <property type="match status" value="1"/>
</dbReference>
<dbReference type="FunFam" id="3.20.20.60:FF:000003">
    <property type="entry name" value="3-methyl-2-oxobutanoate hydroxymethyltransferase"/>
    <property type="match status" value="1"/>
</dbReference>
<dbReference type="Gene3D" id="3.20.20.60">
    <property type="entry name" value="Phosphoenolpyruvate-binding domains"/>
    <property type="match status" value="1"/>
</dbReference>
<dbReference type="HAMAP" id="MF_00156">
    <property type="entry name" value="PanB"/>
    <property type="match status" value="1"/>
</dbReference>
<dbReference type="InterPro" id="IPR003700">
    <property type="entry name" value="Pantoate_hydroxy_MeTrfase"/>
</dbReference>
<dbReference type="InterPro" id="IPR015813">
    <property type="entry name" value="Pyrv/PenolPyrv_kinase-like_dom"/>
</dbReference>
<dbReference type="InterPro" id="IPR040442">
    <property type="entry name" value="Pyrv_kinase-like_dom_sf"/>
</dbReference>
<dbReference type="NCBIfam" id="TIGR00222">
    <property type="entry name" value="panB"/>
    <property type="match status" value="1"/>
</dbReference>
<dbReference type="NCBIfam" id="NF001452">
    <property type="entry name" value="PRK00311.1"/>
    <property type="match status" value="1"/>
</dbReference>
<dbReference type="PANTHER" id="PTHR20881">
    <property type="entry name" value="3-METHYL-2-OXOBUTANOATE HYDROXYMETHYLTRANSFERASE"/>
    <property type="match status" value="1"/>
</dbReference>
<dbReference type="PANTHER" id="PTHR20881:SF0">
    <property type="entry name" value="3-METHYL-2-OXOBUTANOATE HYDROXYMETHYLTRANSFERASE"/>
    <property type="match status" value="1"/>
</dbReference>
<dbReference type="Pfam" id="PF02548">
    <property type="entry name" value="Pantoate_transf"/>
    <property type="match status" value="1"/>
</dbReference>
<dbReference type="PIRSF" id="PIRSF000388">
    <property type="entry name" value="Pantoate_hydroxy_MeTrfase"/>
    <property type="match status" value="1"/>
</dbReference>
<dbReference type="SUPFAM" id="SSF51621">
    <property type="entry name" value="Phosphoenolpyruvate/pyruvate domain"/>
    <property type="match status" value="1"/>
</dbReference>
<accession>B7MNZ6</accession>
<gene>
    <name evidence="1" type="primary">panB</name>
    <name type="ordered locus">ECED1_0139</name>
</gene>
<feature type="chain" id="PRO_1000123382" description="3-methyl-2-oxobutanoate hydroxymethyltransferase">
    <location>
        <begin position="1"/>
        <end position="264"/>
    </location>
</feature>
<feature type="active site" description="Proton acceptor" evidence="1">
    <location>
        <position position="181"/>
    </location>
</feature>
<feature type="binding site" evidence="1">
    <location>
        <begin position="45"/>
        <end position="46"/>
    </location>
    <ligand>
        <name>3-methyl-2-oxobutanoate</name>
        <dbReference type="ChEBI" id="CHEBI:11851"/>
    </ligand>
</feature>
<feature type="binding site" evidence="1">
    <location>
        <position position="45"/>
    </location>
    <ligand>
        <name>Mg(2+)</name>
        <dbReference type="ChEBI" id="CHEBI:18420"/>
    </ligand>
</feature>
<feature type="binding site" evidence="1">
    <location>
        <position position="84"/>
    </location>
    <ligand>
        <name>3-methyl-2-oxobutanoate</name>
        <dbReference type="ChEBI" id="CHEBI:11851"/>
    </ligand>
</feature>
<feature type="binding site" evidence="1">
    <location>
        <position position="84"/>
    </location>
    <ligand>
        <name>Mg(2+)</name>
        <dbReference type="ChEBI" id="CHEBI:18420"/>
    </ligand>
</feature>
<feature type="binding site" evidence="1">
    <location>
        <position position="112"/>
    </location>
    <ligand>
        <name>3-methyl-2-oxobutanoate</name>
        <dbReference type="ChEBI" id="CHEBI:11851"/>
    </ligand>
</feature>
<feature type="binding site" evidence="1">
    <location>
        <position position="114"/>
    </location>
    <ligand>
        <name>Mg(2+)</name>
        <dbReference type="ChEBI" id="CHEBI:18420"/>
    </ligand>
</feature>
<proteinExistence type="inferred from homology"/>
<comment type="function">
    <text evidence="1">Catalyzes the reversible reaction in which hydroxymethyl group from 5,10-methylenetetrahydrofolate is transferred onto alpha-ketoisovalerate to form ketopantoate.</text>
</comment>
<comment type="catalytic activity">
    <reaction evidence="1">
        <text>3-methyl-2-oxobutanoate + (6R)-5,10-methylene-5,6,7,8-tetrahydrofolate + H2O = 2-dehydropantoate + (6S)-5,6,7,8-tetrahydrofolate</text>
        <dbReference type="Rhea" id="RHEA:11824"/>
        <dbReference type="ChEBI" id="CHEBI:11561"/>
        <dbReference type="ChEBI" id="CHEBI:11851"/>
        <dbReference type="ChEBI" id="CHEBI:15377"/>
        <dbReference type="ChEBI" id="CHEBI:15636"/>
        <dbReference type="ChEBI" id="CHEBI:57453"/>
        <dbReference type="EC" id="2.1.2.11"/>
    </reaction>
</comment>
<comment type="cofactor">
    <cofactor evidence="1">
        <name>Mg(2+)</name>
        <dbReference type="ChEBI" id="CHEBI:18420"/>
    </cofactor>
    <text evidence="1">Binds 1 Mg(2+) ion per subunit.</text>
</comment>
<comment type="pathway">
    <text evidence="1">Cofactor biosynthesis; (R)-pantothenate biosynthesis; (R)-pantoate from 3-methyl-2-oxobutanoate: step 1/2.</text>
</comment>
<comment type="subunit">
    <text evidence="1">Homodecamer; pentamer of dimers.</text>
</comment>
<comment type="subcellular location">
    <subcellularLocation>
        <location evidence="1">Cytoplasm</location>
    </subcellularLocation>
</comment>
<comment type="similarity">
    <text evidence="1">Belongs to the PanB family.</text>
</comment>